<sequence length="628" mass="68745">MDGFAQDWPSLTHTTDNVLTMDQLGGVSGAVGDLPGDVGFEPQTRARSNTWPCPHPEPFVEPADELDSTKASNQQLAAGDSQQTIQSANAAKKNSARRNAWGNLSYADLITHAIGSATDKRLTLSQIYEWMVQNVPYFKDKGDSNSSAGWKNSIRHNLSLHNRFMRVQNEGTGKSSWWMLNPEAKPGKSVRRRAASMETSRYEKRRGRAKKRVEALRQAGVVGLNDATPSPSSSVSEGLDHFPESPLHSGGFQLSPDFRQRASSNASSCGRLSPIRALDLEPEWGFTVDYQNTTLTQAQSQVLDQLAGSIADELKLHPDMLQQQGFSAASGLPTQPPPPPYPAPQQQQQQQPQQQQAYTLNGGPPGGYASLQPQPQCLIHRSLNCSCLHNARDGLSPNSVTTTMSPAYPNSEPSSDSLNTYSNVVIDGSGDNGSLLVQQQRQQQQQQQQQQQLGSNLEGQCLEVLNNEAQPIDEFNLENFPVENLECNMEELLQQEMSYDGLLDINIPLAAVSTNAPLVNLINNSSTTISSSSNIGCSTTTSSSSLSASAQLNQLQAQLQQQHQQQQQQQQQQQQQQLQQQQQQLLLNNNNNNNNSLELATQTASANLNARVQYSQPSVVTSPPSWVH</sequence>
<dbReference type="EMBL" id="CH964251">
    <property type="protein sequence ID" value="EDW83128.1"/>
    <property type="molecule type" value="Genomic_DNA"/>
</dbReference>
<dbReference type="SMR" id="B4NFR1"/>
<dbReference type="STRING" id="7260.B4NFR1"/>
<dbReference type="EnsemblMetazoa" id="XM_023179680.2">
    <property type="protein sequence ID" value="XP_023035448.1"/>
    <property type="gene ID" value="LOC6649777"/>
</dbReference>
<dbReference type="GeneID" id="6649777"/>
<dbReference type="KEGG" id="dwi:6649777"/>
<dbReference type="CTD" id="41709"/>
<dbReference type="eggNOG" id="KOG2294">
    <property type="taxonomic scope" value="Eukaryota"/>
</dbReference>
<dbReference type="HOGENOM" id="CLU_024472_1_0_1"/>
<dbReference type="OMA" id="WWMINRD"/>
<dbReference type="OrthoDB" id="5954824at2759"/>
<dbReference type="PhylomeDB" id="B4NFR1"/>
<dbReference type="ChiTaRS" id="foxo">
    <property type="organism name" value="fly"/>
</dbReference>
<dbReference type="Proteomes" id="UP000007798">
    <property type="component" value="Unassembled WGS sequence"/>
</dbReference>
<dbReference type="GO" id="GO:0005737">
    <property type="term" value="C:cytoplasm"/>
    <property type="evidence" value="ECO:0000250"/>
    <property type="project" value="UniProtKB"/>
</dbReference>
<dbReference type="GO" id="GO:0005634">
    <property type="term" value="C:nucleus"/>
    <property type="evidence" value="ECO:0000250"/>
    <property type="project" value="UniProtKB"/>
</dbReference>
<dbReference type="GO" id="GO:0003700">
    <property type="term" value="F:DNA-binding transcription factor activity"/>
    <property type="evidence" value="ECO:0000250"/>
    <property type="project" value="UniProtKB"/>
</dbReference>
<dbReference type="GO" id="GO:0000981">
    <property type="term" value="F:DNA-binding transcription factor activity, RNA polymerase II-specific"/>
    <property type="evidence" value="ECO:0007669"/>
    <property type="project" value="TreeGrafter"/>
</dbReference>
<dbReference type="GO" id="GO:0000978">
    <property type="term" value="F:RNA polymerase II cis-regulatory region sequence-specific DNA binding"/>
    <property type="evidence" value="ECO:0007669"/>
    <property type="project" value="TreeGrafter"/>
</dbReference>
<dbReference type="GO" id="GO:0030154">
    <property type="term" value="P:cell differentiation"/>
    <property type="evidence" value="ECO:0007669"/>
    <property type="project" value="UniProtKB-KW"/>
</dbReference>
<dbReference type="GO" id="GO:0042593">
    <property type="term" value="P:glucose homeostasis"/>
    <property type="evidence" value="ECO:0000250"/>
    <property type="project" value="UniProtKB"/>
</dbReference>
<dbReference type="GO" id="GO:0030308">
    <property type="term" value="P:negative regulation of cell growth"/>
    <property type="evidence" value="ECO:0000250"/>
    <property type="project" value="UniProtKB"/>
</dbReference>
<dbReference type="GO" id="GO:0008285">
    <property type="term" value="P:negative regulation of cell population proliferation"/>
    <property type="evidence" value="ECO:0000250"/>
    <property type="project" value="UniProtKB"/>
</dbReference>
<dbReference type="GO" id="GO:0046627">
    <property type="term" value="P:negative regulation of insulin receptor signaling pathway"/>
    <property type="evidence" value="ECO:0000250"/>
    <property type="project" value="UniProtKB"/>
</dbReference>
<dbReference type="GO" id="GO:0006355">
    <property type="term" value="P:regulation of DNA-templated transcription"/>
    <property type="evidence" value="ECO:0000250"/>
    <property type="project" value="UniProtKB"/>
</dbReference>
<dbReference type="GO" id="GO:0019216">
    <property type="term" value="P:regulation of lipid metabolic process"/>
    <property type="evidence" value="ECO:0000250"/>
    <property type="project" value="UniProtKB"/>
</dbReference>
<dbReference type="CDD" id="cd20032">
    <property type="entry name" value="FH_FOXO"/>
    <property type="match status" value="1"/>
</dbReference>
<dbReference type="FunFam" id="1.10.10.10:FF:000032">
    <property type="entry name" value="Forkhead box protein O4"/>
    <property type="match status" value="1"/>
</dbReference>
<dbReference type="Gene3D" id="1.10.10.10">
    <property type="entry name" value="Winged helix-like DNA-binding domain superfamily/Winged helix DNA-binding domain"/>
    <property type="match status" value="1"/>
</dbReference>
<dbReference type="InterPro" id="IPR001766">
    <property type="entry name" value="Fork_head_dom"/>
</dbReference>
<dbReference type="InterPro" id="IPR030456">
    <property type="entry name" value="TF_fork_head_CS_2"/>
</dbReference>
<dbReference type="InterPro" id="IPR036388">
    <property type="entry name" value="WH-like_DNA-bd_sf"/>
</dbReference>
<dbReference type="InterPro" id="IPR036390">
    <property type="entry name" value="WH_DNA-bd_sf"/>
</dbReference>
<dbReference type="PANTHER" id="PTHR45767">
    <property type="entry name" value="FORKHEAD BOX PROTEIN O"/>
    <property type="match status" value="1"/>
</dbReference>
<dbReference type="PANTHER" id="PTHR45767:SF2">
    <property type="entry name" value="FORKHEAD BOX PROTEIN O"/>
    <property type="match status" value="1"/>
</dbReference>
<dbReference type="Pfam" id="PF00250">
    <property type="entry name" value="Forkhead"/>
    <property type="match status" value="1"/>
</dbReference>
<dbReference type="PRINTS" id="PR00053">
    <property type="entry name" value="FORKHEAD"/>
</dbReference>
<dbReference type="SMART" id="SM00339">
    <property type="entry name" value="FH"/>
    <property type="match status" value="1"/>
</dbReference>
<dbReference type="SUPFAM" id="SSF46785">
    <property type="entry name" value="Winged helix' DNA-binding domain"/>
    <property type="match status" value="1"/>
</dbReference>
<dbReference type="PROSITE" id="PS00658">
    <property type="entry name" value="FORK_HEAD_2"/>
    <property type="match status" value="1"/>
</dbReference>
<dbReference type="PROSITE" id="PS50039">
    <property type="entry name" value="FORK_HEAD_3"/>
    <property type="match status" value="1"/>
</dbReference>
<proteinExistence type="inferred from homology"/>
<evidence type="ECO:0000250" key="1"/>
<evidence type="ECO:0000250" key="2">
    <source>
        <dbReference type="UniProtKB" id="Q95V55"/>
    </source>
</evidence>
<evidence type="ECO:0000255" key="3">
    <source>
        <dbReference type="PROSITE-ProRule" id="PRU00089"/>
    </source>
</evidence>
<evidence type="ECO:0000256" key="4">
    <source>
        <dbReference type="SAM" id="MobiDB-lite"/>
    </source>
</evidence>
<evidence type="ECO:0000312" key="5">
    <source>
        <dbReference type="EMBL" id="EDW83128.1"/>
    </source>
</evidence>
<reference evidence="5" key="1">
    <citation type="journal article" date="2007" name="Nature">
        <title>Evolution of genes and genomes on the Drosophila phylogeny.</title>
        <authorList>
            <consortium name="Drosophila 12 genomes consortium"/>
        </authorList>
    </citation>
    <scope>NUCLEOTIDE SEQUENCE [LARGE SCALE GENOMIC DNA]</scope>
    <source>
        <strain evidence="5">Tucson 14030-0811.24</strain>
    </source>
</reference>
<keyword id="KW-0010">Activator</keyword>
<keyword id="KW-0131">Cell cycle</keyword>
<keyword id="KW-0963">Cytoplasm</keyword>
<keyword id="KW-0217">Developmental protein</keyword>
<keyword id="KW-0221">Differentiation</keyword>
<keyword id="KW-0238">DNA-binding</keyword>
<keyword id="KW-0341">Growth regulation</keyword>
<keyword id="KW-0539">Nucleus</keyword>
<keyword id="KW-0597">Phosphoprotein</keyword>
<keyword id="KW-1185">Reference proteome</keyword>
<keyword id="KW-0804">Transcription</keyword>
<keyword id="KW-0805">Transcription regulation</keyword>
<name>FOXO_DROWI</name>
<protein>
    <recommendedName>
        <fullName evidence="2">Forkhead box protein O</fullName>
    </recommendedName>
</protein>
<organism>
    <name type="scientific">Drosophila willistoni</name>
    <name type="common">Fruit fly</name>
    <dbReference type="NCBI Taxonomy" id="7260"/>
    <lineage>
        <taxon>Eukaryota</taxon>
        <taxon>Metazoa</taxon>
        <taxon>Ecdysozoa</taxon>
        <taxon>Arthropoda</taxon>
        <taxon>Hexapoda</taxon>
        <taxon>Insecta</taxon>
        <taxon>Pterygota</taxon>
        <taxon>Neoptera</taxon>
        <taxon>Endopterygota</taxon>
        <taxon>Diptera</taxon>
        <taxon>Brachycera</taxon>
        <taxon>Muscomorpha</taxon>
        <taxon>Ephydroidea</taxon>
        <taxon>Drosophilidae</taxon>
        <taxon>Drosophila</taxon>
        <taxon>Sophophora</taxon>
    </lineage>
</organism>
<gene>
    <name evidence="2" type="primary">foxo</name>
    <name type="ORF">GK22687</name>
</gene>
<feature type="chain" id="PRO_0000396512" description="Forkhead box protein O">
    <location>
        <begin position="1"/>
        <end position="628"/>
    </location>
</feature>
<feature type="DNA-binding region" description="Fork-head" evidence="3">
    <location>
        <begin position="101"/>
        <end position="207"/>
    </location>
</feature>
<feature type="region of interest" description="Disordered" evidence="4">
    <location>
        <begin position="188"/>
        <end position="210"/>
    </location>
</feature>
<feature type="region of interest" description="Disordered" evidence="4">
    <location>
        <begin position="223"/>
        <end position="270"/>
    </location>
</feature>
<feature type="region of interest" description="Disordered" evidence="4">
    <location>
        <begin position="327"/>
        <end position="373"/>
    </location>
</feature>
<feature type="region of interest" description="Disordered" evidence="4">
    <location>
        <begin position="398"/>
        <end position="451"/>
    </location>
</feature>
<feature type="compositionally biased region" description="Polar residues" evidence="4">
    <location>
        <begin position="227"/>
        <end position="236"/>
    </location>
</feature>
<feature type="compositionally biased region" description="Polar residues" evidence="4">
    <location>
        <begin position="261"/>
        <end position="270"/>
    </location>
</feature>
<feature type="compositionally biased region" description="Pro residues" evidence="4">
    <location>
        <begin position="334"/>
        <end position="343"/>
    </location>
</feature>
<feature type="compositionally biased region" description="Low complexity" evidence="4">
    <location>
        <begin position="344"/>
        <end position="359"/>
    </location>
</feature>
<feature type="compositionally biased region" description="Polar residues" evidence="4">
    <location>
        <begin position="411"/>
        <end position="423"/>
    </location>
</feature>
<feature type="compositionally biased region" description="Low complexity" evidence="4">
    <location>
        <begin position="438"/>
        <end position="451"/>
    </location>
</feature>
<feature type="modified residue" description="Phosphothreonine; by PKB/AKT1" evidence="2">
    <location>
        <position position="50"/>
    </location>
</feature>
<feature type="modified residue" description="Phosphoserine" evidence="2">
    <location>
        <position position="81"/>
    </location>
</feature>
<feature type="modified residue" description="Phosphoserine; by PKB/AKT1" evidence="2">
    <location>
        <position position="196"/>
    </location>
</feature>
<feature type="modified residue" description="Phosphoserine; by PKB/AKT1" evidence="2">
    <location>
        <position position="264"/>
    </location>
</feature>
<feature type="modified residue" description="Phosphoserine" evidence="2">
    <location>
        <position position="267"/>
    </location>
</feature>
<feature type="modified residue" description="Phosphoserine" evidence="2">
    <location>
        <position position="268"/>
    </location>
</feature>
<feature type="modified residue" description="Phosphoserine" evidence="2">
    <location>
        <position position="273"/>
    </location>
</feature>
<comment type="function">
    <text evidence="1">Transcription factor involved in the regulation of the insulin signaling pathway. Consistently activates both the downstream target Thor\d4EBP and the feedback control target InR. Involved in negative regulation of the cell cycle, modulating cell growth and proliferation. In response to cellular stresses, such as nutrient deprivation or increased levels of reactive oxygen species, foxo is activated and inhibits growth through the action of target genes such as Thor. Foxo activated in the adult fat body can regulate lifespan in adults; an insulin peptide itself may function as one secondary messenger of insulin-regulated aging. Also regulates Lip4, homolog of human acid lipases, thereby acting as a key modulator of lipid metabolism by insulin signaling and integrates insulin responses to glucose and lipid homeostasis (By similarity).</text>
</comment>
<comment type="subunit">
    <text evidence="2">Interacts with melt.</text>
</comment>
<comment type="subcellular location">
    <subcellularLocation>
        <location evidence="2">Cytoplasm</location>
    </subcellularLocation>
    <subcellularLocation>
        <location evidence="2 3">Nucleus</location>
    </subcellularLocation>
    <text evidence="2">When phosphorylated, translocated from nucleus to cytoplasm. Dephosphorylation triggers nuclear translocation (By similarity).</text>
</comment>
<accession>B4NFR1</accession>